<proteinExistence type="inferred from homology"/>
<comment type="function">
    <text evidence="1">The UvrABC repair system catalyzes the recognition and processing of DNA lesions. A damage recognition complex composed of 2 UvrA and 2 UvrB subunits scans DNA for abnormalities. Upon binding of the UvrA(2)B(2) complex to a putative damaged site, the DNA wraps around one UvrB monomer. DNA wrap is dependent on ATP binding by UvrB and probably causes local melting of the DNA helix, facilitating insertion of UvrB beta-hairpin between the DNA strands. Then UvrB probes one DNA strand for the presence of a lesion. If a lesion is found the UvrA subunits dissociate and the UvrB-DNA preincision complex is formed. This complex is subsequently bound by UvrC and the second UvrB is released. If no lesion is found, the DNA wraps around the other UvrB subunit that will check the other stand for damage.</text>
</comment>
<comment type="subunit">
    <text evidence="1">Forms a heterotetramer with UvrA during the search for lesions. Interacts with UvrC in an incision complex.</text>
</comment>
<comment type="subcellular location">
    <subcellularLocation>
        <location evidence="1">Cytoplasm</location>
    </subcellularLocation>
</comment>
<comment type="domain">
    <text evidence="1">The beta-hairpin motif is involved in DNA binding.</text>
</comment>
<comment type="similarity">
    <text evidence="1">Belongs to the UvrB family.</text>
</comment>
<evidence type="ECO:0000255" key="1">
    <source>
        <dbReference type="HAMAP-Rule" id="MF_00204"/>
    </source>
</evidence>
<protein>
    <recommendedName>
        <fullName evidence="1">UvrABC system protein B</fullName>
        <shortName evidence="1">Protein UvrB</shortName>
    </recommendedName>
    <alternativeName>
        <fullName evidence="1">Excinuclease ABC subunit B</fullName>
    </alternativeName>
</protein>
<name>UVRB_ENT38</name>
<sequence length="673" mass="76200">MSKMFKLNSAFRPSGDQPEAIRRLKEGLEDGLAHQTLLGVTGSGKTFTVANVIADLQRPTMVLAPNKTLAAQLYGEMKEFFPDNAVEYFVSYYDYYQPEAYVPSSDTFIEKDASVNEHIEQMRLSATKALLERRDVIVVASVSAIYGLGDPDLYLKMMLHLTNGMIIDQRAILRRLAELQYARNDQAFQRGTFRVRGEVIDIFPAESDDLALRVELFDEEVERLSLFDPLTGHVDSVIQRFTVYPKTHYVTPRERIVQAMEDIKVELAERRKVLLENNKLLEEQRLSQRTQFDLEMMNELGYCSGIENYSRYLSGRGPGEAPPTLFDYLPADGLLVVDESHVTIPQIGGMYRGDRARKETLVEYGFRLPSALDNRPMKFEEFEALAPQTIYVSATPGNYELEKSGEDVVDQVVRPTGLLDPIIEVRPVGTQVDDLLSEIRARAIINERVLVTTLTKRMAEDLTEYLEEHGERVRYLHSDIDTVERMEIIRDLRLGEFDVLVGINLLREGLDMPEVSLVAILDADKEGFLRSERSLIQTIGRAARNINGKAILYGDRITASMAKAISETERRREKQHQYNLDNGIVPQGLNKKVVDILALGQGLAKTKAKGRGKSRSPVEADPVELVLTPKALQQKIHELEGLMMQHAQNLEFEEAAQVRDQLHQLRQLFIAAS</sequence>
<gene>
    <name evidence="1" type="primary">uvrB</name>
    <name type="ordered locus">Ent638_1271</name>
</gene>
<accession>A4W8C2</accession>
<organism>
    <name type="scientific">Enterobacter sp. (strain 638)</name>
    <dbReference type="NCBI Taxonomy" id="399742"/>
    <lineage>
        <taxon>Bacteria</taxon>
        <taxon>Pseudomonadati</taxon>
        <taxon>Pseudomonadota</taxon>
        <taxon>Gammaproteobacteria</taxon>
        <taxon>Enterobacterales</taxon>
        <taxon>Enterobacteriaceae</taxon>
        <taxon>Enterobacter</taxon>
    </lineage>
</organism>
<reference key="1">
    <citation type="journal article" date="2010" name="PLoS Genet.">
        <title>Genome sequence of the plant growth promoting endophytic bacterium Enterobacter sp. 638.</title>
        <authorList>
            <person name="Taghavi S."/>
            <person name="van der Lelie D."/>
            <person name="Hoffman A."/>
            <person name="Zhang Y.B."/>
            <person name="Walla M.D."/>
            <person name="Vangronsveld J."/>
            <person name="Newman L."/>
            <person name="Monchy S."/>
        </authorList>
    </citation>
    <scope>NUCLEOTIDE SEQUENCE [LARGE SCALE GENOMIC DNA]</scope>
    <source>
        <strain>638</strain>
    </source>
</reference>
<feature type="chain" id="PRO_1000077892" description="UvrABC system protein B">
    <location>
        <begin position="1"/>
        <end position="673"/>
    </location>
</feature>
<feature type="domain" description="Helicase ATP-binding" evidence="1">
    <location>
        <begin position="26"/>
        <end position="183"/>
    </location>
</feature>
<feature type="domain" description="Helicase C-terminal" evidence="1">
    <location>
        <begin position="431"/>
        <end position="597"/>
    </location>
</feature>
<feature type="domain" description="UVR" evidence="1">
    <location>
        <begin position="633"/>
        <end position="668"/>
    </location>
</feature>
<feature type="short sequence motif" description="Beta-hairpin">
    <location>
        <begin position="92"/>
        <end position="115"/>
    </location>
</feature>
<feature type="binding site" evidence="1">
    <location>
        <begin position="39"/>
        <end position="46"/>
    </location>
    <ligand>
        <name>ATP</name>
        <dbReference type="ChEBI" id="CHEBI:30616"/>
    </ligand>
</feature>
<dbReference type="EMBL" id="CP000653">
    <property type="protein sequence ID" value="ABP59952.1"/>
    <property type="molecule type" value="Genomic_DNA"/>
</dbReference>
<dbReference type="RefSeq" id="WP_012016671.1">
    <property type="nucleotide sequence ID" value="NC_009436.1"/>
</dbReference>
<dbReference type="SMR" id="A4W8C2"/>
<dbReference type="STRING" id="399742.Ent638_1271"/>
<dbReference type="KEGG" id="ent:Ent638_1271"/>
<dbReference type="eggNOG" id="COG0556">
    <property type="taxonomic scope" value="Bacteria"/>
</dbReference>
<dbReference type="HOGENOM" id="CLU_009621_2_1_6"/>
<dbReference type="OrthoDB" id="9806651at2"/>
<dbReference type="Proteomes" id="UP000000230">
    <property type="component" value="Chromosome"/>
</dbReference>
<dbReference type="GO" id="GO:0005737">
    <property type="term" value="C:cytoplasm"/>
    <property type="evidence" value="ECO:0007669"/>
    <property type="project" value="UniProtKB-SubCell"/>
</dbReference>
<dbReference type="GO" id="GO:0009380">
    <property type="term" value="C:excinuclease repair complex"/>
    <property type="evidence" value="ECO:0007669"/>
    <property type="project" value="InterPro"/>
</dbReference>
<dbReference type="GO" id="GO:0005524">
    <property type="term" value="F:ATP binding"/>
    <property type="evidence" value="ECO:0007669"/>
    <property type="project" value="UniProtKB-UniRule"/>
</dbReference>
<dbReference type="GO" id="GO:0016887">
    <property type="term" value="F:ATP hydrolysis activity"/>
    <property type="evidence" value="ECO:0007669"/>
    <property type="project" value="InterPro"/>
</dbReference>
<dbReference type="GO" id="GO:0003677">
    <property type="term" value="F:DNA binding"/>
    <property type="evidence" value="ECO:0007669"/>
    <property type="project" value="UniProtKB-UniRule"/>
</dbReference>
<dbReference type="GO" id="GO:0009381">
    <property type="term" value="F:excinuclease ABC activity"/>
    <property type="evidence" value="ECO:0007669"/>
    <property type="project" value="UniProtKB-UniRule"/>
</dbReference>
<dbReference type="GO" id="GO:0004386">
    <property type="term" value="F:helicase activity"/>
    <property type="evidence" value="ECO:0007669"/>
    <property type="project" value="UniProtKB-KW"/>
</dbReference>
<dbReference type="GO" id="GO:0006289">
    <property type="term" value="P:nucleotide-excision repair"/>
    <property type="evidence" value="ECO:0007669"/>
    <property type="project" value="UniProtKB-UniRule"/>
</dbReference>
<dbReference type="GO" id="GO:0009432">
    <property type="term" value="P:SOS response"/>
    <property type="evidence" value="ECO:0007669"/>
    <property type="project" value="UniProtKB-UniRule"/>
</dbReference>
<dbReference type="CDD" id="cd17916">
    <property type="entry name" value="DEXHc_UvrB"/>
    <property type="match status" value="1"/>
</dbReference>
<dbReference type="CDD" id="cd18790">
    <property type="entry name" value="SF2_C_UvrB"/>
    <property type="match status" value="1"/>
</dbReference>
<dbReference type="FunFam" id="3.40.50.300:FF:000257">
    <property type="entry name" value="UvrABC system protein B"/>
    <property type="match status" value="1"/>
</dbReference>
<dbReference type="FunFam" id="3.40.50.300:FF:000401">
    <property type="entry name" value="UvrABC system protein B"/>
    <property type="match status" value="1"/>
</dbReference>
<dbReference type="FunFam" id="3.40.50.300:FF:000477">
    <property type="entry name" value="UvrABC system protein B"/>
    <property type="match status" value="1"/>
</dbReference>
<dbReference type="Gene3D" id="3.40.50.300">
    <property type="entry name" value="P-loop containing nucleotide triphosphate hydrolases"/>
    <property type="match status" value="3"/>
</dbReference>
<dbReference type="Gene3D" id="4.10.860.10">
    <property type="entry name" value="UVR domain"/>
    <property type="match status" value="1"/>
</dbReference>
<dbReference type="HAMAP" id="MF_00204">
    <property type="entry name" value="UvrB"/>
    <property type="match status" value="1"/>
</dbReference>
<dbReference type="InterPro" id="IPR006935">
    <property type="entry name" value="Helicase/UvrB_N"/>
</dbReference>
<dbReference type="InterPro" id="IPR014001">
    <property type="entry name" value="Helicase_ATP-bd"/>
</dbReference>
<dbReference type="InterPro" id="IPR001650">
    <property type="entry name" value="Helicase_C-like"/>
</dbReference>
<dbReference type="InterPro" id="IPR027417">
    <property type="entry name" value="P-loop_NTPase"/>
</dbReference>
<dbReference type="InterPro" id="IPR001943">
    <property type="entry name" value="UVR_dom"/>
</dbReference>
<dbReference type="InterPro" id="IPR036876">
    <property type="entry name" value="UVR_dom_sf"/>
</dbReference>
<dbReference type="InterPro" id="IPR004807">
    <property type="entry name" value="UvrB"/>
</dbReference>
<dbReference type="InterPro" id="IPR041471">
    <property type="entry name" value="UvrB_inter"/>
</dbReference>
<dbReference type="InterPro" id="IPR024759">
    <property type="entry name" value="UvrB_YAD/RRR_dom"/>
</dbReference>
<dbReference type="NCBIfam" id="NF003673">
    <property type="entry name" value="PRK05298.1"/>
    <property type="match status" value="1"/>
</dbReference>
<dbReference type="NCBIfam" id="TIGR00631">
    <property type="entry name" value="uvrb"/>
    <property type="match status" value="1"/>
</dbReference>
<dbReference type="PANTHER" id="PTHR24029">
    <property type="entry name" value="UVRABC SYSTEM PROTEIN B"/>
    <property type="match status" value="1"/>
</dbReference>
<dbReference type="PANTHER" id="PTHR24029:SF0">
    <property type="entry name" value="UVRABC SYSTEM PROTEIN B"/>
    <property type="match status" value="1"/>
</dbReference>
<dbReference type="Pfam" id="PF00271">
    <property type="entry name" value="Helicase_C"/>
    <property type="match status" value="1"/>
</dbReference>
<dbReference type="Pfam" id="PF04851">
    <property type="entry name" value="ResIII"/>
    <property type="match status" value="1"/>
</dbReference>
<dbReference type="Pfam" id="PF02151">
    <property type="entry name" value="UVR"/>
    <property type="match status" value="1"/>
</dbReference>
<dbReference type="Pfam" id="PF12344">
    <property type="entry name" value="UvrB"/>
    <property type="match status" value="1"/>
</dbReference>
<dbReference type="Pfam" id="PF17757">
    <property type="entry name" value="UvrB_inter"/>
    <property type="match status" value="1"/>
</dbReference>
<dbReference type="SMART" id="SM00487">
    <property type="entry name" value="DEXDc"/>
    <property type="match status" value="1"/>
</dbReference>
<dbReference type="SMART" id="SM00490">
    <property type="entry name" value="HELICc"/>
    <property type="match status" value="1"/>
</dbReference>
<dbReference type="SUPFAM" id="SSF46600">
    <property type="entry name" value="C-terminal UvrC-binding domain of UvrB"/>
    <property type="match status" value="1"/>
</dbReference>
<dbReference type="SUPFAM" id="SSF52540">
    <property type="entry name" value="P-loop containing nucleoside triphosphate hydrolases"/>
    <property type="match status" value="2"/>
</dbReference>
<dbReference type="PROSITE" id="PS51192">
    <property type="entry name" value="HELICASE_ATP_BIND_1"/>
    <property type="match status" value="1"/>
</dbReference>
<dbReference type="PROSITE" id="PS51194">
    <property type="entry name" value="HELICASE_CTER"/>
    <property type="match status" value="1"/>
</dbReference>
<dbReference type="PROSITE" id="PS50151">
    <property type="entry name" value="UVR"/>
    <property type="match status" value="1"/>
</dbReference>
<keyword id="KW-0067">ATP-binding</keyword>
<keyword id="KW-0963">Cytoplasm</keyword>
<keyword id="KW-0227">DNA damage</keyword>
<keyword id="KW-0228">DNA excision</keyword>
<keyword id="KW-0234">DNA repair</keyword>
<keyword id="KW-0267">Excision nuclease</keyword>
<keyword id="KW-0347">Helicase</keyword>
<keyword id="KW-0378">Hydrolase</keyword>
<keyword id="KW-0547">Nucleotide-binding</keyword>
<keyword id="KW-0742">SOS response</keyword>